<comment type="function">
    <text evidence="1">Together with its co-chaperonin GroES, plays an essential role in assisting protein folding. The GroEL-GroES system forms a nano-cage that allows encapsulation of the non-native substrate proteins and provides a physical environment optimized to promote and accelerate protein folding.</text>
</comment>
<comment type="catalytic activity">
    <reaction evidence="1">
        <text>ATP + H2O + a folded polypeptide = ADP + phosphate + an unfolded polypeptide.</text>
        <dbReference type="EC" id="5.6.1.7"/>
    </reaction>
</comment>
<comment type="subunit">
    <text evidence="1">Forms a cylinder of 14 subunits composed of two heptameric rings stacked back-to-back. Interacts with the co-chaperonin GroES.</text>
</comment>
<comment type="subcellular location">
    <subcellularLocation>
        <location evidence="1">Cytoplasm</location>
    </subcellularLocation>
</comment>
<comment type="similarity">
    <text evidence="1">Belongs to the chaperonin (HSP60) family.</text>
</comment>
<evidence type="ECO:0000255" key="1">
    <source>
        <dbReference type="HAMAP-Rule" id="MF_00600"/>
    </source>
</evidence>
<reference key="1">
    <citation type="journal article" date="2008" name="J. Bacteriol.">
        <title>Genome sequence of Staphylococcus aureus strain Newman and comparative analysis of staphylococcal genomes: polymorphism and evolution of two major pathogenicity islands.</title>
        <authorList>
            <person name="Baba T."/>
            <person name="Bae T."/>
            <person name="Schneewind O."/>
            <person name="Takeuchi F."/>
            <person name="Hiramatsu K."/>
        </authorList>
    </citation>
    <scope>NUCLEOTIDE SEQUENCE [LARGE SCALE GENOMIC DNA]</scope>
    <source>
        <strain>Newman</strain>
    </source>
</reference>
<organism>
    <name type="scientific">Staphylococcus aureus (strain Newman)</name>
    <dbReference type="NCBI Taxonomy" id="426430"/>
    <lineage>
        <taxon>Bacteria</taxon>
        <taxon>Bacillati</taxon>
        <taxon>Bacillota</taxon>
        <taxon>Bacilli</taxon>
        <taxon>Bacillales</taxon>
        <taxon>Staphylococcaceae</taxon>
        <taxon>Staphylococcus</taxon>
    </lineage>
</organism>
<sequence>MVKQLKFSEDARQAMLRGVDQLANAVKVTIGPKGRNVVLDKEFTAPLITNDGVTIAKEIELEDPYENMGAKLVQEVANKTNEIAGDGTTTATVLAQAMIQEGLKNVTSGANPVGLRQGIDKAVKVAVEALHENSQKVENKNEIAQVGAISAADEEIGRYISEAMEKVGNDGVITIEESNGLNTELEVVEGMQFDRGYQSPYMVTDSDKMVAELERPYILVTDKKISSFQDILPLLEQVVQSNRPILIVADEVEGDALTNIVLNRMRGTFTAVAVKAPGFGDRRKAMLEDLAILTGAQVITDDLGLDLKDASIDMLGTASKVEVTKDNTTVVDGDGDENSIDARVSQLKSQIEETESDFDREKLQERLAKLAGGVAVIKVGAASETELKERKLRIEDALNSTRAAVEEGIVAGGGTALVNVYQKVSEIEAEGDIETGVNIVLKALTAPVRQIAENAGLEGSVIVERLKNAEPGVGFNAATNEWVNMLEEGIVDPTKVTRSALQHAASVAAMFLTTEAVVASIPEKNNDQPNMGGMPGMM</sequence>
<protein>
    <recommendedName>
        <fullName evidence="1">Chaperonin GroEL</fullName>
        <ecNumber evidence="1">5.6.1.7</ecNumber>
    </recommendedName>
    <alternativeName>
        <fullName evidence="1">60 kDa chaperonin</fullName>
    </alternativeName>
    <alternativeName>
        <fullName evidence="1">Chaperonin-60</fullName>
        <shortName evidence="1">Cpn60</shortName>
    </alternativeName>
</protein>
<proteinExistence type="inferred from homology"/>
<name>CH60_STAAE</name>
<dbReference type="EC" id="5.6.1.7" evidence="1"/>
<dbReference type="EMBL" id="AP009351">
    <property type="protein sequence ID" value="BAF68209.1"/>
    <property type="molecule type" value="Genomic_DNA"/>
</dbReference>
<dbReference type="RefSeq" id="WP_000240645.1">
    <property type="nucleotide sequence ID" value="NZ_JBBIAE010000015.1"/>
</dbReference>
<dbReference type="SMR" id="A6QIM7"/>
<dbReference type="KEGG" id="sae:NWMN_1937"/>
<dbReference type="HOGENOM" id="CLU_016503_3_0_9"/>
<dbReference type="Proteomes" id="UP000006386">
    <property type="component" value="Chromosome"/>
</dbReference>
<dbReference type="GO" id="GO:0005737">
    <property type="term" value="C:cytoplasm"/>
    <property type="evidence" value="ECO:0007669"/>
    <property type="project" value="UniProtKB-SubCell"/>
</dbReference>
<dbReference type="GO" id="GO:0005524">
    <property type="term" value="F:ATP binding"/>
    <property type="evidence" value="ECO:0007669"/>
    <property type="project" value="UniProtKB-UniRule"/>
</dbReference>
<dbReference type="GO" id="GO:0140662">
    <property type="term" value="F:ATP-dependent protein folding chaperone"/>
    <property type="evidence" value="ECO:0007669"/>
    <property type="project" value="InterPro"/>
</dbReference>
<dbReference type="GO" id="GO:0016853">
    <property type="term" value="F:isomerase activity"/>
    <property type="evidence" value="ECO:0007669"/>
    <property type="project" value="UniProtKB-KW"/>
</dbReference>
<dbReference type="GO" id="GO:0051082">
    <property type="term" value="F:unfolded protein binding"/>
    <property type="evidence" value="ECO:0007669"/>
    <property type="project" value="UniProtKB-UniRule"/>
</dbReference>
<dbReference type="GO" id="GO:0042026">
    <property type="term" value="P:protein refolding"/>
    <property type="evidence" value="ECO:0007669"/>
    <property type="project" value="UniProtKB-UniRule"/>
</dbReference>
<dbReference type="CDD" id="cd03344">
    <property type="entry name" value="GroEL"/>
    <property type="match status" value="1"/>
</dbReference>
<dbReference type="FunFam" id="1.10.560.10:FF:000001">
    <property type="entry name" value="60 kDa chaperonin"/>
    <property type="match status" value="1"/>
</dbReference>
<dbReference type="FunFam" id="3.50.7.10:FF:000001">
    <property type="entry name" value="60 kDa chaperonin"/>
    <property type="match status" value="1"/>
</dbReference>
<dbReference type="Gene3D" id="3.50.7.10">
    <property type="entry name" value="GroEL"/>
    <property type="match status" value="1"/>
</dbReference>
<dbReference type="Gene3D" id="1.10.560.10">
    <property type="entry name" value="GroEL-like equatorial domain"/>
    <property type="match status" value="1"/>
</dbReference>
<dbReference type="Gene3D" id="3.30.260.10">
    <property type="entry name" value="TCP-1-like chaperonin intermediate domain"/>
    <property type="match status" value="1"/>
</dbReference>
<dbReference type="HAMAP" id="MF_00600">
    <property type="entry name" value="CH60"/>
    <property type="match status" value="1"/>
</dbReference>
<dbReference type="InterPro" id="IPR018370">
    <property type="entry name" value="Chaperonin_Cpn60_CS"/>
</dbReference>
<dbReference type="InterPro" id="IPR001844">
    <property type="entry name" value="Cpn60/GroEL"/>
</dbReference>
<dbReference type="InterPro" id="IPR002423">
    <property type="entry name" value="Cpn60/GroEL/TCP-1"/>
</dbReference>
<dbReference type="InterPro" id="IPR027409">
    <property type="entry name" value="GroEL-like_apical_dom_sf"/>
</dbReference>
<dbReference type="InterPro" id="IPR027413">
    <property type="entry name" value="GROEL-like_equatorial_sf"/>
</dbReference>
<dbReference type="InterPro" id="IPR027410">
    <property type="entry name" value="TCP-1-like_intermed_sf"/>
</dbReference>
<dbReference type="NCBIfam" id="TIGR02348">
    <property type="entry name" value="GroEL"/>
    <property type="match status" value="1"/>
</dbReference>
<dbReference type="NCBIfam" id="NF000592">
    <property type="entry name" value="PRK00013.1"/>
    <property type="match status" value="1"/>
</dbReference>
<dbReference type="NCBIfam" id="NF009487">
    <property type="entry name" value="PRK12849.1"/>
    <property type="match status" value="1"/>
</dbReference>
<dbReference type="NCBIfam" id="NF009488">
    <property type="entry name" value="PRK12850.1"/>
    <property type="match status" value="1"/>
</dbReference>
<dbReference type="NCBIfam" id="NF009489">
    <property type="entry name" value="PRK12851.1"/>
    <property type="match status" value="1"/>
</dbReference>
<dbReference type="PANTHER" id="PTHR45633">
    <property type="entry name" value="60 KDA HEAT SHOCK PROTEIN, MITOCHONDRIAL"/>
    <property type="match status" value="1"/>
</dbReference>
<dbReference type="Pfam" id="PF00118">
    <property type="entry name" value="Cpn60_TCP1"/>
    <property type="match status" value="1"/>
</dbReference>
<dbReference type="PRINTS" id="PR00298">
    <property type="entry name" value="CHAPERONIN60"/>
</dbReference>
<dbReference type="SUPFAM" id="SSF52029">
    <property type="entry name" value="GroEL apical domain-like"/>
    <property type="match status" value="1"/>
</dbReference>
<dbReference type="SUPFAM" id="SSF48592">
    <property type="entry name" value="GroEL equatorial domain-like"/>
    <property type="match status" value="1"/>
</dbReference>
<dbReference type="SUPFAM" id="SSF54849">
    <property type="entry name" value="GroEL-intermediate domain like"/>
    <property type="match status" value="1"/>
</dbReference>
<dbReference type="PROSITE" id="PS00296">
    <property type="entry name" value="CHAPERONINS_CPN60"/>
    <property type="match status" value="1"/>
</dbReference>
<keyword id="KW-0067">ATP-binding</keyword>
<keyword id="KW-0143">Chaperone</keyword>
<keyword id="KW-0963">Cytoplasm</keyword>
<keyword id="KW-0413">Isomerase</keyword>
<keyword id="KW-0547">Nucleotide-binding</keyword>
<gene>
    <name evidence="1" type="primary">groEL</name>
    <name evidence="1" type="synonym">groL</name>
    <name type="ordered locus">NWMN_1937</name>
</gene>
<feature type="chain" id="PRO_1000072634" description="Chaperonin GroEL">
    <location>
        <begin position="1"/>
        <end position="538"/>
    </location>
</feature>
<feature type="binding site" evidence="1">
    <location>
        <begin position="29"/>
        <end position="32"/>
    </location>
    <ligand>
        <name>ATP</name>
        <dbReference type="ChEBI" id="CHEBI:30616"/>
    </ligand>
</feature>
<feature type="binding site" evidence="1">
    <location>
        <begin position="86"/>
        <end position="90"/>
    </location>
    <ligand>
        <name>ATP</name>
        <dbReference type="ChEBI" id="CHEBI:30616"/>
    </ligand>
</feature>
<feature type="binding site" evidence="1">
    <location>
        <position position="413"/>
    </location>
    <ligand>
        <name>ATP</name>
        <dbReference type="ChEBI" id="CHEBI:30616"/>
    </ligand>
</feature>
<feature type="binding site" evidence="1">
    <location>
        <begin position="476"/>
        <end position="478"/>
    </location>
    <ligand>
        <name>ATP</name>
        <dbReference type="ChEBI" id="CHEBI:30616"/>
    </ligand>
</feature>
<feature type="binding site" evidence="1">
    <location>
        <position position="492"/>
    </location>
    <ligand>
        <name>ATP</name>
        <dbReference type="ChEBI" id="CHEBI:30616"/>
    </ligand>
</feature>
<accession>A6QIM7</accession>